<comment type="function">
    <text evidence="1">Involved in peptide bond synthesis. Alleviates ribosome stalling that occurs when 3 or more consecutive Pro residues or the sequence PPG is present in a protein, possibly by augmenting the peptidyl transferase activity of the ribosome. Modification of Lys-34 is required for alleviation.</text>
</comment>
<comment type="pathway">
    <text evidence="1">Protein biosynthesis; polypeptide chain elongation.</text>
</comment>
<comment type="subcellular location">
    <subcellularLocation>
        <location evidence="1">Cytoplasm</location>
    </subcellularLocation>
</comment>
<comment type="PTM">
    <text evidence="1">May be beta-lysylated on the epsilon-amino group of Lys-34 by the combined action of EpmA and EpmB, and then hydroxylated on the C5 position of the same residue by EpmC (if this protein is present). Lysylation is critical for the stimulatory effect of EF-P on peptide-bond formation. The lysylation moiety may extend toward the peptidyltransferase center and stabilize the terminal 3-CCA end of the tRNA. Hydroxylation of the C5 position on Lys-34 may allow additional potential stabilizing hydrogen-bond interactions with the P-tRNA.</text>
</comment>
<comment type="similarity">
    <text evidence="1">Belongs to the elongation factor P family.</text>
</comment>
<keyword id="KW-0963">Cytoplasm</keyword>
<keyword id="KW-0251">Elongation factor</keyword>
<keyword id="KW-0379">Hydroxylation</keyword>
<keyword id="KW-0648">Protein biosynthesis</keyword>
<keyword id="KW-1185">Reference proteome</keyword>
<evidence type="ECO:0000255" key="1">
    <source>
        <dbReference type="HAMAP-Rule" id="MF_00141"/>
    </source>
</evidence>
<reference key="1">
    <citation type="submission" date="2006-03" db="EMBL/GenBank/DDBJ databases">
        <title>Complete genome sequence of Francisella tularensis LVS (Live Vaccine Strain).</title>
        <authorList>
            <person name="Chain P."/>
            <person name="Larimer F."/>
            <person name="Land M."/>
            <person name="Stilwagen S."/>
            <person name="Larsson P."/>
            <person name="Bearden S."/>
            <person name="Chu M."/>
            <person name="Oyston P."/>
            <person name="Forsman M."/>
            <person name="Andersson S."/>
            <person name="Lindler L."/>
            <person name="Titball R."/>
            <person name="Garcia E."/>
        </authorList>
    </citation>
    <scope>NUCLEOTIDE SEQUENCE [LARGE SCALE GENOMIC DNA]</scope>
    <source>
        <strain>LVS</strain>
    </source>
</reference>
<accession>Q2A5M4</accession>
<proteinExistence type="inferred from homology"/>
<gene>
    <name evidence="1" type="primary">efp</name>
    <name type="ordered locus">FTL_0182</name>
</gene>
<protein>
    <recommendedName>
        <fullName evidence="1">Elongation factor P</fullName>
        <shortName evidence="1">EF-P</shortName>
    </recommendedName>
</protein>
<dbReference type="EMBL" id="AM233362">
    <property type="protein sequence ID" value="CAJ78623.1"/>
    <property type="molecule type" value="Genomic_DNA"/>
</dbReference>
<dbReference type="RefSeq" id="WP_003014194.1">
    <property type="nucleotide sequence ID" value="NZ_CP009694.1"/>
</dbReference>
<dbReference type="SMR" id="Q2A5M4"/>
<dbReference type="KEGG" id="ftl:FTL_0182"/>
<dbReference type="UniPathway" id="UPA00345"/>
<dbReference type="Proteomes" id="UP000001944">
    <property type="component" value="Chromosome"/>
</dbReference>
<dbReference type="GO" id="GO:0005737">
    <property type="term" value="C:cytoplasm"/>
    <property type="evidence" value="ECO:0007669"/>
    <property type="project" value="UniProtKB-SubCell"/>
</dbReference>
<dbReference type="GO" id="GO:0003746">
    <property type="term" value="F:translation elongation factor activity"/>
    <property type="evidence" value="ECO:0007669"/>
    <property type="project" value="UniProtKB-UniRule"/>
</dbReference>
<dbReference type="GO" id="GO:0043043">
    <property type="term" value="P:peptide biosynthetic process"/>
    <property type="evidence" value="ECO:0007669"/>
    <property type="project" value="InterPro"/>
</dbReference>
<dbReference type="CDD" id="cd04470">
    <property type="entry name" value="S1_EF-P_repeat_1"/>
    <property type="match status" value="1"/>
</dbReference>
<dbReference type="CDD" id="cd05794">
    <property type="entry name" value="S1_EF-P_repeat_2"/>
    <property type="match status" value="1"/>
</dbReference>
<dbReference type="FunFam" id="2.30.30.30:FF:000003">
    <property type="entry name" value="Elongation factor P"/>
    <property type="match status" value="1"/>
</dbReference>
<dbReference type="FunFam" id="2.40.50.140:FF:000004">
    <property type="entry name" value="Elongation factor P"/>
    <property type="match status" value="1"/>
</dbReference>
<dbReference type="FunFam" id="2.40.50.140:FF:000009">
    <property type="entry name" value="Elongation factor P"/>
    <property type="match status" value="1"/>
</dbReference>
<dbReference type="Gene3D" id="2.30.30.30">
    <property type="match status" value="1"/>
</dbReference>
<dbReference type="Gene3D" id="2.40.50.140">
    <property type="entry name" value="Nucleic acid-binding proteins"/>
    <property type="match status" value="2"/>
</dbReference>
<dbReference type="HAMAP" id="MF_00141">
    <property type="entry name" value="EF_P"/>
    <property type="match status" value="1"/>
</dbReference>
<dbReference type="InterPro" id="IPR015365">
    <property type="entry name" value="Elong-fact-P_C"/>
</dbReference>
<dbReference type="InterPro" id="IPR012340">
    <property type="entry name" value="NA-bd_OB-fold"/>
</dbReference>
<dbReference type="InterPro" id="IPR014722">
    <property type="entry name" value="Rib_uL2_dom2"/>
</dbReference>
<dbReference type="InterPro" id="IPR020599">
    <property type="entry name" value="Transl_elong_fac_P/YeiP"/>
</dbReference>
<dbReference type="InterPro" id="IPR013185">
    <property type="entry name" value="Transl_elong_KOW-like"/>
</dbReference>
<dbReference type="InterPro" id="IPR001059">
    <property type="entry name" value="Transl_elong_P/YeiP_cen"/>
</dbReference>
<dbReference type="InterPro" id="IPR013852">
    <property type="entry name" value="Transl_elong_P/YeiP_CS"/>
</dbReference>
<dbReference type="InterPro" id="IPR011768">
    <property type="entry name" value="Transl_elongation_fac_P"/>
</dbReference>
<dbReference type="InterPro" id="IPR008991">
    <property type="entry name" value="Translation_prot_SH3-like_sf"/>
</dbReference>
<dbReference type="NCBIfam" id="TIGR00038">
    <property type="entry name" value="efp"/>
    <property type="match status" value="1"/>
</dbReference>
<dbReference type="NCBIfam" id="NF001810">
    <property type="entry name" value="PRK00529.1"/>
    <property type="match status" value="1"/>
</dbReference>
<dbReference type="PANTHER" id="PTHR30053">
    <property type="entry name" value="ELONGATION FACTOR P"/>
    <property type="match status" value="1"/>
</dbReference>
<dbReference type="PANTHER" id="PTHR30053:SF12">
    <property type="entry name" value="ELONGATION FACTOR P (EF-P) FAMILY PROTEIN"/>
    <property type="match status" value="1"/>
</dbReference>
<dbReference type="Pfam" id="PF01132">
    <property type="entry name" value="EFP"/>
    <property type="match status" value="1"/>
</dbReference>
<dbReference type="Pfam" id="PF08207">
    <property type="entry name" value="EFP_N"/>
    <property type="match status" value="1"/>
</dbReference>
<dbReference type="Pfam" id="PF09285">
    <property type="entry name" value="Elong-fact-P_C"/>
    <property type="match status" value="1"/>
</dbReference>
<dbReference type="PIRSF" id="PIRSF005901">
    <property type="entry name" value="EF-P"/>
    <property type="match status" value="1"/>
</dbReference>
<dbReference type="SMART" id="SM01185">
    <property type="entry name" value="EFP"/>
    <property type="match status" value="1"/>
</dbReference>
<dbReference type="SMART" id="SM00841">
    <property type="entry name" value="Elong-fact-P_C"/>
    <property type="match status" value="1"/>
</dbReference>
<dbReference type="SUPFAM" id="SSF50249">
    <property type="entry name" value="Nucleic acid-binding proteins"/>
    <property type="match status" value="2"/>
</dbReference>
<dbReference type="SUPFAM" id="SSF50104">
    <property type="entry name" value="Translation proteins SH3-like domain"/>
    <property type="match status" value="1"/>
</dbReference>
<dbReference type="PROSITE" id="PS01275">
    <property type="entry name" value="EFP"/>
    <property type="match status" value="1"/>
</dbReference>
<organism>
    <name type="scientific">Francisella tularensis subsp. holarctica (strain LVS)</name>
    <dbReference type="NCBI Taxonomy" id="376619"/>
    <lineage>
        <taxon>Bacteria</taxon>
        <taxon>Pseudomonadati</taxon>
        <taxon>Pseudomonadota</taxon>
        <taxon>Gammaproteobacteria</taxon>
        <taxon>Thiotrichales</taxon>
        <taxon>Francisellaceae</taxon>
        <taxon>Francisella</taxon>
    </lineage>
</organism>
<sequence length="189" mass="20903">MASYSTNEFKGGLKVLIDGNPMVIVENEFVKPGKGQAFNRVKLKNLLNDRVVEKTFKSGESVEAADVEELTTVYSYFDGDSYVFMHPETFEQYMVSEEALGETKKWLKDQDEYQVILFNGQPISIIAANFVNLEIIETDPGLKGDTAGTGGKPATLSTGAVVRVPLFVQTGEIIKVDTRTSTYVSRVKD</sequence>
<name>EFP_FRATH</name>
<feature type="chain" id="PRO_1000010747" description="Elongation factor P">
    <location>
        <begin position="1"/>
        <end position="189"/>
    </location>
</feature>
<feature type="modified residue" description="N6-(3,6-diaminohexanoyl)-5-hydroxylysine" evidence="1">
    <location>
        <position position="34"/>
    </location>
</feature>